<reference key="1">
    <citation type="submission" date="2008-08" db="EMBL/GenBank/DDBJ databases">
        <title>Complete sequence of Vibrio fischeri strain MJ11.</title>
        <authorList>
            <person name="Mandel M.J."/>
            <person name="Stabb E.V."/>
            <person name="Ruby E.G."/>
            <person name="Ferriera S."/>
            <person name="Johnson J."/>
            <person name="Kravitz S."/>
            <person name="Beeson K."/>
            <person name="Sutton G."/>
            <person name="Rogers Y.-H."/>
            <person name="Friedman R."/>
            <person name="Frazier M."/>
            <person name="Venter J.C."/>
        </authorList>
    </citation>
    <scope>NUCLEOTIDE SEQUENCE [LARGE SCALE GENOMIC DNA]</scope>
    <source>
        <strain>MJ11</strain>
    </source>
</reference>
<proteinExistence type="inferred from homology"/>
<name>DDL_ALIFM</name>
<evidence type="ECO:0000250" key="1"/>
<evidence type="ECO:0000255" key="2">
    <source>
        <dbReference type="HAMAP-Rule" id="MF_00047"/>
    </source>
</evidence>
<keyword id="KW-0067">ATP-binding</keyword>
<keyword id="KW-0133">Cell shape</keyword>
<keyword id="KW-0961">Cell wall biogenesis/degradation</keyword>
<keyword id="KW-0963">Cytoplasm</keyword>
<keyword id="KW-0436">Ligase</keyword>
<keyword id="KW-0460">Magnesium</keyword>
<keyword id="KW-0464">Manganese</keyword>
<keyword id="KW-0479">Metal-binding</keyword>
<keyword id="KW-0547">Nucleotide-binding</keyword>
<keyword id="KW-0573">Peptidoglycan synthesis</keyword>
<sequence>MTHILLLCGGGGTEHEVSLVSSKYIAQQLSELDAFDITHLEIKDEGWFHIESGLKYELRSDKTLLSGETVSSPVDYVVPCIHGYPGETGDIQSMLDMLSIPYLGCDAESSTNSFNKITSKLWYDALGIPNTPYLFLTENNEETHQSALAAFKQWGGLFVKAACQGSSVGCYKVTSEEELAQAINGAFGYSQQVLVEKAVKPRELEVAAYEIDGQLFTTAPGEVTAPDGAFYTYDEKYGSGSHSTTSLDAQNLTEEQVKLIDQYSRKVFTQMKLKDLSRIDFFLTDDNEIYLNEVNTFPGMTPISMFPKLLEHNGDCFKTFLQKAVLNAIK</sequence>
<dbReference type="EC" id="6.3.2.4" evidence="2"/>
<dbReference type="EMBL" id="CP001133">
    <property type="protein sequence ID" value="ACH63474.1"/>
    <property type="molecule type" value="Genomic_DNA"/>
</dbReference>
<dbReference type="RefSeq" id="WP_012534691.1">
    <property type="nucleotide sequence ID" value="NC_011186.1"/>
</dbReference>
<dbReference type="SMR" id="B5ETW5"/>
<dbReference type="KEGG" id="vfm:VFMJ11_A0584"/>
<dbReference type="HOGENOM" id="CLU_039268_0_0_6"/>
<dbReference type="UniPathway" id="UPA00219"/>
<dbReference type="Proteomes" id="UP000001857">
    <property type="component" value="Chromosome II"/>
</dbReference>
<dbReference type="GO" id="GO:0005829">
    <property type="term" value="C:cytosol"/>
    <property type="evidence" value="ECO:0007669"/>
    <property type="project" value="TreeGrafter"/>
</dbReference>
<dbReference type="GO" id="GO:0005524">
    <property type="term" value="F:ATP binding"/>
    <property type="evidence" value="ECO:0007669"/>
    <property type="project" value="UniProtKB-KW"/>
</dbReference>
<dbReference type="GO" id="GO:0008716">
    <property type="term" value="F:D-alanine-D-alanine ligase activity"/>
    <property type="evidence" value="ECO:0007669"/>
    <property type="project" value="UniProtKB-UniRule"/>
</dbReference>
<dbReference type="GO" id="GO:0046872">
    <property type="term" value="F:metal ion binding"/>
    <property type="evidence" value="ECO:0007669"/>
    <property type="project" value="UniProtKB-KW"/>
</dbReference>
<dbReference type="GO" id="GO:0071555">
    <property type="term" value="P:cell wall organization"/>
    <property type="evidence" value="ECO:0007669"/>
    <property type="project" value="UniProtKB-KW"/>
</dbReference>
<dbReference type="GO" id="GO:0009252">
    <property type="term" value="P:peptidoglycan biosynthetic process"/>
    <property type="evidence" value="ECO:0007669"/>
    <property type="project" value="UniProtKB-UniRule"/>
</dbReference>
<dbReference type="GO" id="GO:0008360">
    <property type="term" value="P:regulation of cell shape"/>
    <property type="evidence" value="ECO:0007669"/>
    <property type="project" value="UniProtKB-KW"/>
</dbReference>
<dbReference type="Gene3D" id="3.40.50.20">
    <property type="match status" value="1"/>
</dbReference>
<dbReference type="Gene3D" id="3.30.1490.20">
    <property type="entry name" value="ATP-grasp fold, A domain"/>
    <property type="match status" value="1"/>
</dbReference>
<dbReference type="Gene3D" id="3.30.470.20">
    <property type="entry name" value="ATP-grasp fold, B domain"/>
    <property type="match status" value="1"/>
</dbReference>
<dbReference type="HAMAP" id="MF_00047">
    <property type="entry name" value="Dala_Dala_lig"/>
    <property type="match status" value="1"/>
</dbReference>
<dbReference type="InterPro" id="IPR011761">
    <property type="entry name" value="ATP-grasp"/>
</dbReference>
<dbReference type="InterPro" id="IPR013815">
    <property type="entry name" value="ATP_grasp_subdomain_1"/>
</dbReference>
<dbReference type="InterPro" id="IPR000291">
    <property type="entry name" value="D-Ala_lig_Van_CS"/>
</dbReference>
<dbReference type="InterPro" id="IPR005905">
    <property type="entry name" value="D_ala_D_ala"/>
</dbReference>
<dbReference type="InterPro" id="IPR011095">
    <property type="entry name" value="Dala_Dala_lig_C"/>
</dbReference>
<dbReference type="InterPro" id="IPR011127">
    <property type="entry name" value="Dala_Dala_lig_N"/>
</dbReference>
<dbReference type="InterPro" id="IPR016185">
    <property type="entry name" value="PreATP-grasp_dom_sf"/>
</dbReference>
<dbReference type="NCBIfam" id="TIGR01205">
    <property type="entry name" value="D_ala_D_alaTIGR"/>
    <property type="match status" value="1"/>
</dbReference>
<dbReference type="NCBIfam" id="NF002527">
    <property type="entry name" value="PRK01966.1-3"/>
    <property type="match status" value="1"/>
</dbReference>
<dbReference type="PANTHER" id="PTHR23132">
    <property type="entry name" value="D-ALANINE--D-ALANINE LIGASE"/>
    <property type="match status" value="1"/>
</dbReference>
<dbReference type="PANTHER" id="PTHR23132:SF25">
    <property type="entry name" value="D-ALANINE--D-ALANINE LIGASE A"/>
    <property type="match status" value="1"/>
</dbReference>
<dbReference type="Pfam" id="PF07478">
    <property type="entry name" value="Dala_Dala_lig_C"/>
    <property type="match status" value="1"/>
</dbReference>
<dbReference type="Pfam" id="PF01820">
    <property type="entry name" value="Dala_Dala_lig_N"/>
    <property type="match status" value="1"/>
</dbReference>
<dbReference type="PIRSF" id="PIRSF039102">
    <property type="entry name" value="Ddl/VanB"/>
    <property type="match status" value="1"/>
</dbReference>
<dbReference type="SUPFAM" id="SSF56059">
    <property type="entry name" value="Glutathione synthetase ATP-binding domain-like"/>
    <property type="match status" value="1"/>
</dbReference>
<dbReference type="SUPFAM" id="SSF52440">
    <property type="entry name" value="PreATP-grasp domain"/>
    <property type="match status" value="1"/>
</dbReference>
<dbReference type="PROSITE" id="PS50975">
    <property type="entry name" value="ATP_GRASP"/>
    <property type="match status" value="1"/>
</dbReference>
<dbReference type="PROSITE" id="PS00843">
    <property type="entry name" value="DALA_DALA_LIGASE_1"/>
    <property type="match status" value="1"/>
</dbReference>
<dbReference type="PROSITE" id="PS00844">
    <property type="entry name" value="DALA_DALA_LIGASE_2"/>
    <property type="match status" value="1"/>
</dbReference>
<gene>
    <name evidence="2" type="primary">ddl</name>
    <name type="ordered locus">VFMJ11_A0584</name>
</gene>
<comment type="function">
    <text evidence="2">Cell wall formation.</text>
</comment>
<comment type="catalytic activity">
    <reaction evidence="2">
        <text>2 D-alanine + ATP = D-alanyl-D-alanine + ADP + phosphate + H(+)</text>
        <dbReference type="Rhea" id="RHEA:11224"/>
        <dbReference type="ChEBI" id="CHEBI:15378"/>
        <dbReference type="ChEBI" id="CHEBI:30616"/>
        <dbReference type="ChEBI" id="CHEBI:43474"/>
        <dbReference type="ChEBI" id="CHEBI:57416"/>
        <dbReference type="ChEBI" id="CHEBI:57822"/>
        <dbReference type="ChEBI" id="CHEBI:456216"/>
        <dbReference type="EC" id="6.3.2.4"/>
    </reaction>
</comment>
<comment type="cofactor">
    <cofactor evidence="1">
        <name>Mg(2+)</name>
        <dbReference type="ChEBI" id="CHEBI:18420"/>
    </cofactor>
    <cofactor evidence="1">
        <name>Mn(2+)</name>
        <dbReference type="ChEBI" id="CHEBI:29035"/>
    </cofactor>
    <text evidence="1">Binds 2 magnesium or manganese ions per subunit.</text>
</comment>
<comment type="pathway">
    <text evidence="2">Cell wall biogenesis; peptidoglycan biosynthesis.</text>
</comment>
<comment type="subcellular location">
    <subcellularLocation>
        <location evidence="2">Cytoplasm</location>
    </subcellularLocation>
</comment>
<comment type="similarity">
    <text evidence="2">Belongs to the D-alanine--D-alanine ligase family.</text>
</comment>
<feature type="chain" id="PRO_1000091214" description="D-alanine--D-alanine ligase">
    <location>
        <begin position="1"/>
        <end position="330"/>
    </location>
</feature>
<feature type="domain" description="ATP-grasp" evidence="2">
    <location>
        <begin position="120"/>
        <end position="326"/>
    </location>
</feature>
<feature type="binding site" evidence="2">
    <location>
        <begin position="150"/>
        <end position="205"/>
    </location>
    <ligand>
        <name>ATP</name>
        <dbReference type="ChEBI" id="CHEBI:30616"/>
    </ligand>
</feature>
<feature type="binding site" evidence="2">
    <location>
        <position position="280"/>
    </location>
    <ligand>
        <name>Mg(2+)</name>
        <dbReference type="ChEBI" id="CHEBI:18420"/>
        <label>1</label>
    </ligand>
</feature>
<feature type="binding site" evidence="2">
    <location>
        <position position="293"/>
    </location>
    <ligand>
        <name>Mg(2+)</name>
        <dbReference type="ChEBI" id="CHEBI:18420"/>
        <label>1</label>
    </ligand>
</feature>
<feature type="binding site" evidence="2">
    <location>
        <position position="293"/>
    </location>
    <ligand>
        <name>Mg(2+)</name>
        <dbReference type="ChEBI" id="CHEBI:18420"/>
        <label>2</label>
    </ligand>
</feature>
<feature type="binding site" evidence="2">
    <location>
        <position position="295"/>
    </location>
    <ligand>
        <name>Mg(2+)</name>
        <dbReference type="ChEBI" id="CHEBI:18420"/>
        <label>2</label>
    </ligand>
</feature>
<organism>
    <name type="scientific">Aliivibrio fischeri (strain MJ11)</name>
    <name type="common">Vibrio fischeri</name>
    <dbReference type="NCBI Taxonomy" id="388396"/>
    <lineage>
        <taxon>Bacteria</taxon>
        <taxon>Pseudomonadati</taxon>
        <taxon>Pseudomonadota</taxon>
        <taxon>Gammaproteobacteria</taxon>
        <taxon>Vibrionales</taxon>
        <taxon>Vibrionaceae</taxon>
        <taxon>Aliivibrio</taxon>
    </lineage>
</organism>
<accession>B5ETW5</accession>
<protein>
    <recommendedName>
        <fullName evidence="2">D-alanine--D-alanine ligase</fullName>
        <ecNumber evidence="2">6.3.2.4</ecNumber>
    </recommendedName>
    <alternativeName>
        <fullName evidence="2">D-Ala-D-Ala ligase</fullName>
    </alternativeName>
    <alternativeName>
        <fullName evidence="2">D-alanylalanine synthetase</fullName>
    </alternativeName>
</protein>